<keyword id="KW-0413">Isomerase</keyword>
<keyword id="KW-1185">Reference proteome</keyword>
<dbReference type="EC" id="5.1.-.-"/>
<dbReference type="EMBL" id="BC105465">
    <property type="protein sequence ID" value="AAI05466.1"/>
    <property type="molecule type" value="mRNA"/>
</dbReference>
<dbReference type="RefSeq" id="NP_001039351.1">
    <property type="nucleotide sequence ID" value="NM_001045886.2"/>
</dbReference>
<dbReference type="RefSeq" id="XP_010818840.1">
    <property type="nucleotide sequence ID" value="XM_010820538.2"/>
</dbReference>
<dbReference type="SMR" id="Q2HJF4"/>
<dbReference type="FunCoup" id="Q2HJF4">
    <property type="interactions" value="316"/>
</dbReference>
<dbReference type="STRING" id="9913.ENSBTAP00000019038"/>
<dbReference type="PaxDb" id="9913-ENSBTAP00000019038"/>
<dbReference type="PeptideAtlas" id="Q2HJF4"/>
<dbReference type="Ensembl" id="ENSBTAT00000019038.4">
    <property type="protein sequence ID" value="ENSBTAP00000019038.3"/>
    <property type="gene ID" value="ENSBTAG00000014315.5"/>
</dbReference>
<dbReference type="GeneID" id="504417"/>
<dbReference type="KEGG" id="bta:504417"/>
<dbReference type="CTD" id="64081"/>
<dbReference type="VEuPathDB" id="HostDB:ENSBTAG00000014315"/>
<dbReference type="VGNC" id="VGNC:32605">
    <property type="gene designation" value="PBLD"/>
</dbReference>
<dbReference type="eggNOG" id="KOG3033">
    <property type="taxonomic scope" value="Eukaryota"/>
</dbReference>
<dbReference type="GeneTree" id="ENSGT00390000017595"/>
<dbReference type="HOGENOM" id="CLU_048756_2_0_1"/>
<dbReference type="InParanoid" id="Q2HJF4"/>
<dbReference type="OMA" id="DWALRWF"/>
<dbReference type="OrthoDB" id="75169at2759"/>
<dbReference type="TreeFam" id="TF314596"/>
<dbReference type="Proteomes" id="UP000009136">
    <property type="component" value="Chromosome 28"/>
</dbReference>
<dbReference type="Bgee" id="ENSBTAG00000014315">
    <property type="expression patterns" value="Expressed in metanephros cortex and 78 other cell types or tissues"/>
</dbReference>
<dbReference type="GO" id="GO:0005737">
    <property type="term" value="C:cytoplasm"/>
    <property type="evidence" value="ECO:0000318"/>
    <property type="project" value="GO_Central"/>
</dbReference>
<dbReference type="GO" id="GO:0042802">
    <property type="term" value="F:identical protein binding"/>
    <property type="evidence" value="ECO:0007669"/>
    <property type="project" value="Ensembl"/>
</dbReference>
<dbReference type="GO" id="GO:0016853">
    <property type="term" value="F:isomerase activity"/>
    <property type="evidence" value="ECO:0000318"/>
    <property type="project" value="GO_Central"/>
</dbReference>
<dbReference type="GO" id="GO:0009058">
    <property type="term" value="P:biosynthetic process"/>
    <property type="evidence" value="ECO:0007669"/>
    <property type="project" value="InterPro"/>
</dbReference>
<dbReference type="GO" id="GO:0030277">
    <property type="term" value="P:maintenance of gastrointestinal epithelium"/>
    <property type="evidence" value="ECO:0007669"/>
    <property type="project" value="Ensembl"/>
</dbReference>
<dbReference type="GO" id="GO:0030512">
    <property type="term" value="P:negative regulation of transforming growth factor beta receptor signaling pathway"/>
    <property type="evidence" value="ECO:0007669"/>
    <property type="project" value="Ensembl"/>
</dbReference>
<dbReference type="FunFam" id="3.10.310.10:FF:000013">
    <property type="entry name" value="Phenazine biosynthesis-like domain-containing protein 1"/>
    <property type="match status" value="1"/>
</dbReference>
<dbReference type="FunFam" id="3.10.310.10:FF:000020">
    <property type="entry name" value="Phenazine biosynthesis-like domain-containing protein 1"/>
    <property type="match status" value="1"/>
</dbReference>
<dbReference type="Gene3D" id="3.10.310.10">
    <property type="entry name" value="Diaminopimelate Epimerase, Chain A, domain 1"/>
    <property type="match status" value="2"/>
</dbReference>
<dbReference type="InterPro" id="IPR003719">
    <property type="entry name" value="Phenazine_PhzF-like"/>
</dbReference>
<dbReference type="NCBIfam" id="TIGR00654">
    <property type="entry name" value="PhzF_family"/>
    <property type="match status" value="1"/>
</dbReference>
<dbReference type="PANTHER" id="PTHR13774">
    <property type="entry name" value="PHENAZINE BIOSYNTHESIS PROTEIN"/>
    <property type="match status" value="1"/>
</dbReference>
<dbReference type="PANTHER" id="PTHR13774:SF17">
    <property type="entry name" value="PHENAZINE BIOSYNTHESIS-LIKE DOMAIN-CONTAINING PROTEIN"/>
    <property type="match status" value="1"/>
</dbReference>
<dbReference type="Pfam" id="PF02567">
    <property type="entry name" value="PhzC-PhzF"/>
    <property type="match status" value="1"/>
</dbReference>
<dbReference type="PIRSF" id="PIRSF016184">
    <property type="entry name" value="PhzC_PhzF"/>
    <property type="match status" value="1"/>
</dbReference>
<dbReference type="SUPFAM" id="SSF54506">
    <property type="entry name" value="Diaminopimelate epimerase-like"/>
    <property type="match status" value="1"/>
</dbReference>
<reference key="1">
    <citation type="submission" date="2005-09" db="EMBL/GenBank/DDBJ databases">
        <authorList>
            <consortium name="NIH - Mammalian Gene Collection (MGC) project"/>
        </authorList>
    </citation>
    <scope>NUCLEOTIDE SEQUENCE [LARGE SCALE MRNA]</scope>
    <source>
        <strain>Hereford</strain>
        <tissue>Fetal liver</tissue>
    </source>
</reference>
<evidence type="ECO:0000250" key="1"/>
<evidence type="ECO:0000305" key="2"/>
<sequence>MKLPIFIADAFTTKAFRGNPAAVCLLENKLDEDLHQKIAKEMNLSETAFIRKLHPNDNFTQSSCFGLRWFTPQNEVPLCGHATLASAAVLFHKIKNVHSTLTFVTMSGELKARKEEDGIVLDLPLYPAHPQKLHEVEDLIKTAIGDTLVQDVRYSPDTKKLLVRLSDTYNRSFLESLTVNTENLLQVETTGKVKGLILTLKGEPGGQTQAFDFYSRYFAPWYGVAEDPVTGSAHTVLSSYWSEQLGKKDLHAFQCSNRGGELTISLRSDGRVDIKGGAALVLEGTLTA</sequence>
<proteinExistence type="evidence at transcript level"/>
<feature type="chain" id="PRO_0000245582" description="Phenazine biosynthesis-like domain-containing protein">
    <location>
        <begin position="1"/>
        <end position="288"/>
    </location>
</feature>
<feature type="active site" evidence="1">
    <location>
        <position position="46"/>
    </location>
</feature>
<comment type="subunit">
    <text evidence="1">Interacts with UNRIP/MAWD.</text>
</comment>
<comment type="similarity">
    <text evidence="2">Belongs to the PhzF family.</text>
</comment>
<organism>
    <name type="scientific">Bos taurus</name>
    <name type="common">Bovine</name>
    <dbReference type="NCBI Taxonomy" id="9913"/>
    <lineage>
        <taxon>Eukaryota</taxon>
        <taxon>Metazoa</taxon>
        <taxon>Chordata</taxon>
        <taxon>Craniata</taxon>
        <taxon>Vertebrata</taxon>
        <taxon>Euteleostomi</taxon>
        <taxon>Mammalia</taxon>
        <taxon>Eutheria</taxon>
        <taxon>Laurasiatheria</taxon>
        <taxon>Artiodactyla</taxon>
        <taxon>Ruminantia</taxon>
        <taxon>Pecora</taxon>
        <taxon>Bovidae</taxon>
        <taxon>Bovinae</taxon>
        <taxon>Bos</taxon>
    </lineage>
</organism>
<accession>Q2HJF4</accession>
<gene>
    <name type="primary">PBLD</name>
    <name type="synonym">MAWBP</name>
</gene>
<name>PBLD_BOVIN</name>
<protein>
    <recommendedName>
        <fullName>Phenazine biosynthesis-like domain-containing protein</fullName>
        <ecNumber>5.1.-.-</ecNumber>
    </recommendedName>
</protein>